<sequence length="192" mass="21711">MADTSDFRNGMTFIWKDDLWEIVDFLHVKPGKGGAFVRTTLKNVKDGHEVEETFRAGAKVDEVRVERREHQYLYEDDYGLHFMDQESYEQFSMPPEQVEGREFLKEGGDVDIVFRADTEEPLRTEVPQKVDLEVTETTPGVKGDTAQGGDKPATLESGATIDVPLFINEGDVVRLNTETEEYETRVSAASTV</sequence>
<comment type="function">
    <text evidence="1">Involved in peptide bond synthesis. Stimulates efficient translation and peptide-bond synthesis on native or reconstituted 70S ribosomes in vitro. Probably functions indirectly by altering the affinity of the ribosome for aminoacyl-tRNA, thus increasing their reactivity as acceptors for peptidyl transferase.</text>
</comment>
<comment type="pathway">
    <text evidence="1">Protein biosynthesis; polypeptide chain elongation.</text>
</comment>
<comment type="subcellular location">
    <subcellularLocation>
        <location evidence="1">Cytoplasm</location>
    </subcellularLocation>
</comment>
<comment type="similarity">
    <text evidence="1">Belongs to the elongation factor P family.</text>
</comment>
<evidence type="ECO:0000255" key="1">
    <source>
        <dbReference type="HAMAP-Rule" id="MF_00141"/>
    </source>
</evidence>
<evidence type="ECO:0000256" key="2">
    <source>
        <dbReference type="SAM" id="MobiDB-lite"/>
    </source>
</evidence>
<dbReference type="EMBL" id="CP000159">
    <property type="protein sequence ID" value="ABC43717.1"/>
    <property type="molecule type" value="Genomic_DNA"/>
</dbReference>
<dbReference type="RefSeq" id="WP_011403696.1">
    <property type="nucleotide sequence ID" value="NC_007677.1"/>
</dbReference>
<dbReference type="RefSeq" id="YP_445068.1">
    <property type="nucleotide sequence ID" value="NC_007677.1"/>
</dbReference>
<dbReference type="SMR" id="Q2S413"/>
<dbReference type="STRING" id="309807.SRU_0935"/>
<dbReference type="EnsemblBacteria" id="ABC43717">
    <property type="protein sequence ID" value="ABC43717"/>
    <property type="gene ID" value="SRU_0935"/>
</dbReference>
<dbReference type="GeneID" id="83727862"/>
<dbReference type="KEGG" id="sru:SRU_0935"/>
<dbReference type="PATRIC" id="fig|309807.25.peg.969"/>
<dbReference type="eggNOG" id="COG0231">
    <property type="taxonomic scope" value="Bacteria"/>
</dbReference>
<dbReference type="HOGENOM" id="CLU_074944_0_1_10"/>
<dbReference type="OrthoDB" id="9801844at2"/>
<dbReference type="UniPathway" id="UPA00345"/>
<dbReference type="Proteomes" id="UP000008674">
    <property type="component" value="Chromosome"/>
</dbReference>
<dbReference type="GO" id="GO:0005737">
    <property type="term" value="C:cytoplasm"/>
    <property type="evidence" value="ECO:0007669"/>
    <property type="project" value="UniProtKB-SubCell"/>
</dbReference>
<dbReference type="GO" id="GO:0003746">
    <property type="term" value="F:translation elongation factor activity"/>
    <property type="evidence" value="ECO:0007669"/>
    <property type="project" value="UniProtKB-UniRule"/>
</dbReference>
<dbReference type="GO" id="GO:0043043">
    <property type="term" value="P:peptide biosynthetic process"/>
    <property type="evidence" value="ECO:0007669"/>
    <property type="project" value="InterPro"/>
</dbReference>
<dbReference type="CDD" id="cd04470">
    <property type="entry name" value="S1_EF-P_repeat_1"/>
    <property type="match status" value="1"/>
</dbReference>
<dbReference type="CDD" id="cd05794">
    <property type="entry name" value="S1_EF-P_repeat_2"/>
    <property type="match status" value="1"/>
</dbReference>
<dbReference type="FunFam" id="2.30.30.30:FF:000003">
    <property type="entry name" value="Elongation factor P"/>
    <property type="match status" value="1"/>
</dbReference>
<dbReference type="FunFam" id="2.40.50.140:FF:000004">
    <property type="entry name" value="Elongation factor P"/>
    <property type="match status" value="1"/>
</dbReference>
<dbReference type="Gene3D" id="2.30.30.30">
    <property type="match status" value="1"/>
</dbReference>
<dbReference type="Gene3D" id="2.40.50.140">
    <property type="entry name" value="Nucleic acid-binding proteins"/>
    <property type="match status" value="2"/>
</dbReference>
<dbReference type="HAMAP" id="MF_00141">
    <property type="entry name" value="EF_P"/>
    <property type="match status" value="1"/>
</dbReference>
<dbReference type="InterPro" id="IPR015365">
    <property type="entry name" value="Elong-fact-P_C"/>
</dbReference>
<dbReference type="InterPro" id="IPR012340">
    <property type="entry name" value="NA-bd_OB-fold"/>
</dbReference>
<dbReference type="InterPro" id="IPR014722">
    <property type="entry name" value="Rib_uL2_dom2"/>
</dbReference>
<dbReference type="InterPro" id="IPR020599">
    <property type="entry name" value="Transl_elong_fac_P/YeiP"/>
</dbReference>
<dbReference type="InterPro" id="IPR013185">
    <property type="entry name" value="Transl_elong_KOW-like"/>
</dbReference>
<dbReference type="InterPro" id="IPR001059">
    <property type="entry name" value="Transl_elong_P/YeiP_cen"/>
</dbReference>
<dbReference type="InterPro" id="IPR013852">
    <property type="entry name" value="Transl_elong_P/YeiP_CS"/>
</dbReference>
<dbReference type="InterPro" id="IPR011768">
    <property type="entry name" value="Transl_elongation_fac_P"/>
</dbReference>
<dbReference type="InterPro" id="IPR008991">
    <property type="entry name" value="Translation_prot_SH3-like_sf"/>
</dbReference>
<dbReference type="NCBIfam" id="TIGR00038">
    <property type="entry name" value="efp"/>
    <property type="match status" value="1"/>
</dbReference>
<dbReference type="NCBIfam" id="NF001810">
    <property type="entry name" value="PRK00529.1"/>
    <property type="match status" value="1"/>
</dbReference>
<dbReference type="PANTHER" id="PTHR30053">
    <property type="entry name" value="ELONGATION FACTOR P"/>
    <property type="match status" value="1"/>
</dbReference>
<dbReference type="PANTHER" id="PTHR30053:SF12">
    <property type="entry name" value="ELONGATION FACTOR P (EF-P) FAMILY PROTEIN"/>
    <property type="match status" value="1"/>
</dbReference>
<dbReference type="Pfam" id="PF01132">
    <property type="entry name" value="EFP"/>
    <property type="match status" value="1"/>
</dbReference>
<dbReference type="Pfam" id="PF08207">
    <property type="entry name" value="EFP_N"/>
    <property type="match status" value="1"/>
</dbReference>
<dbReference type="Pfam" id="PF09285">
    <property type="entry name" value="Elong-fact-P_C"/>
    <property type="match status" value="1"/>
</dbReference>
<dbReference type="PIRSF" id="PIRSF005901">
    <property type="entry name" value="EF-P"/>
    <property type="match status" value="1"/>
</dbReference>
<dbReference type="SMART" id="SM01185">
    <property type="entry name" value="EFP"/>
    <property type="match status" value="1"/>
</dbReference>
<dbReference type="SMART" id="SM00841">
    <property type="entry name" value="Elong-fact-P_C"/>
    <property type="match status" value="1"/>
</dbReference>
<dbReference type="SUPFAM" id="SSF50249">
    <property type="entry name" value="Nucleic acid-binding proteins"/>
    <property type="match status" value="2"/>
</dbReference>
<dbReference type="SUPFAM" id="SSF50104">
    <property type="entry name" value="Translation proteins SH3-like domain"/>
    <property type="match status" value="1"/>
</dbReference>
<dbReference type="PROSITE" id="PS01275">
    <property type="entry name" value="EFP"/>
    <property type="match status" value="1"/>
</dbReference>
<proteinExistence type="inferred from homology"/>
<feature type="chain" id="PRO_1000010844" description="Elongation factor P">
    <location>
        <begin position="1"/>
        <end position="192"/>
    </location>
</feature>
<feature type="region of interest" description="Disordered" evidence="2">
    <location>
        <begin position="133"/>
        <end position="157"/>
    </location>
</feature>
<accession>Q2S413</accession>
<keyword id="KW-0963">Cytoplasm</keyword>
<keyword id="KW-0251">Elongation factor</keyword>
<keyword id="KW-0648">Protein biosynthesis</keyword>
<keyword id="KW-1185">Reference proteome</keyword>
<name>EFP_SALRD</name>
<organism>
    <name type="scientific">Salinibacter ruber (strain DSM 13855 / M31)</name>
    <dbReference type="NCBI Taxonomy" id="309807"/>
    <lineage>
        <taxon>Bacteria</taxon>
        <taxon>Pseudomonadati</taxon>
        <taxon>Rhodothermota</taxon>
        <taxon>Rhodothermia</taxon>
        <taxon>Rhodothermales</taxon>
        <taxon>Salinibacteraceae</taxon>
        <taxon>Salinibacter</taxon>
    </lineage>
</organism>
<protein>
    <recommendedName>
        <fullName evidence="1">Elongation factor P</fullName>
        <shortName evidence="1">EF-P</shortName>
    </recommendedName>
</protein>
<reference key="1">
    <citation type="journal article" date="2005" name="Proc. Natl. Acad. Sci. U.S.A.">
        <title>The genome of Salinibacter ruber: convergence and gene exchange among hyperhalophilic bacteria and archaea.</title>
        <authorList>
            <person name="Mongodin E.F."/>
            <person name="Nelson K.E."/>
            <person name="Daugherty S."/>
            <person name="DeBoy R.T."/>
            <person name="Wister J."/>
            <person name="Khouri H."/>
            <person name="Weidman J."/>
            <person name="Walsh D.A."/>
            <person name="Papke R.T."/>
            <person name="Sanchez Perez G."/>
            <person name="Sharma A.K."/>
            <person name="Nesbo C.L."/>
            <person name="MacLeod D."/>
            <person name="Bapteste E."/>
            <person name="Doolittle W.F."/>
            <person name="Charlebois R.L."/>
            <person name="Legault B."/>
            <person name="Rodriguez-Valera F."/>
        </authorList>
    </citation>
    <scope>NUCLEOTIDE SEQUENCE [LARGE SCALE GENOMIC DNA]</scope>
    <source>
        <strain>DSM 13855 / CECT 5946 / M31</strain>
    </source>
</reference>
<gene>
    <name evidence="1" type="primary">efp</name>
    <name type="ordered locus">SRU_0935</name>
</gene>